<organism>
    <name type="scientific">Prionace glauca</name>
    <name type="common">Blue shark</name>
    <name type="synonym">Squalus glaucus</name>
    <dbReference type="NCBI Taxonomy" id="7815"/>
    <lineage>
        <taxon>Eukaryota</taxon>
        <taxon>Metazoa</taxon>
        <taxon>Chordata</taxon>
        <taxon>Craniata</taxon>
        <taxon>Vertebrata</taxon>
        <taxon>Chondrichthyes</taxon>
        <taxon>Elasmobranchii</taxon>
        <taxon>Galeomorphii</taxon>
        <taxon>Galeoidea</taxon>
        <taxon>Carcharhiniformes</taxon>
        <taxon>Carcharhinidae</taxon>
        <taxon>Prionace</taxon>
    </lineage>
</organism>
<geneLocation type="mitochondrion"/>
<sequence>MAINIRKTHPLLKIMNHALVDLPAPSNISLWWNFGSLLGLCLIIQILTGLFLAMHYTADISMAFSSVVHICRDVNYGWLIRNIHANGASLFFICIYLHIARGLYYGSYLYKETWNIGVILLFLLMATAFVGYVLPWGQMSFWGATVITNLLSAFPYIGDILVQWIWGGFSVDNATLTRFFAFHFLLPFLILALTVIHLLFLHETGSNNPLGINSNADKISFHPYFSYKDLLGFFIMIFFLATLALFMPNLLGDAENFIPANPLVTPPHIKPEWYFLFAYAILRSIPNKLGGVLALLFSIFILMLVPLLHTSKQRSTIFRPMTQIFFWLLVANFLILTWIGGQPVEQPFMMVGQIASISYFALFLIIMPFAGWCENKILSLN</sequence>
<proteinExistence type="inferred from homology"/>
<evidence type="ECO:0000250" key="1"/>
<evidence type="ECO:0000250" key="2">
    <source>
        <dbReference type="UniProtKB" id="P00157"/>
    </source>
</evidence>
<evidence type="ECO:0000255" key="3">
    <source>
        <dbReference type="PROSITE-ProRule" id="PRU00967"/>
    </source>
</evidence>
<evidence type="ECO:0000255" key="4">
    <source>
        <dbReference type="PROSITE-ProRule" id="PRU00968"/>
    </source>
</evidence>
<feature type="chain" id="PRO_0000061435" description="Cytochrome b">
    <location>
        <begin position="1"/>
        <end position="381"/>
    </location>
</feature>
<feature type="transmembrane region" description="Helical" evidence="2">
    <location>
        <begin position="34"/>
        <end position="54"/>
    </location>
</feature>
<feature type="transmembrane region" description="Helical" evidence="2">
    <location>
        <begin position="78"/>
        <end position="99"/>
    </location>
</feature>
<feature type="transmembrane region" description="Helical" evidence="2">
    <location>
        <begin position="114"/>
        <end position="134"/>
    </location>
</feature>
<feature type="transmembrane region" description="Helical" evidence="2">
    <location>
        <begin position="179"/>
        <end position="199"/>
    </location>
</feature>
<feature type="transmembrane region" description="Helical" evidence="2">
    <location>
        <begin position="227"/>
        <end position="247"/>
    </location>
</feature>
<feature type="transmembrane region" description="Helical" evidence="2">
    <location>
        <begin position="289"/>
        <end position="309"/>
    </location>
</feature>
<feature type="transmembrane region" description="Helical" evidence="2">
    <location>
        <begin position="321"/>
        <end position="341"/>
    </location>
</feature>
<feature type="transmembrane region" description="Helical" evidence="2">
    <location>
        <begin position="348"/>
        <end position="368"/>
    </location>
</feature>
<feature type="binding site" description="axial binding residue" evidence="2">
    <location>
        <position position="84"/>
    </location>
    <ligand>
        <name>heme b</name>
        <dbReference type="ChEBI" id="CHEBI:60344"/>
        <label>b562</label>
    </ligand>
    <ligandPart>
        <name>Fe</name>
        <dbReference type="ChEBI" id="CHEBI:18248"/>
    </ligandPart>
</feature>
<feature type="binding site" description="axial binding residue" evidence="2">
    <location>
        <position position="98"/>
    </location>
    <ligand>
        <name>heme b</name>
        <dbReference type="ChEBI" id="CHEBI:60344"/>
        <label>b566</label>
    </ligand>
    <ligandPart>
        <name>Fe</name>
        <dbReference type="ChEBI" id="CHEBI:18248"/>
    </ligandPart>
</feature>
<feature type="binding site" description="axial binding residue" evidence="2">
    <location>
        <position position="183"/>
    </location>
    <ligand>
        <name>heme b</name>
        <dbReference type="ChEBI" id="CHEBI:60344"/>
        <label>b562</label>
    </ligand>
    <ligandPart>
        <name>Fe</name>
        <dbReference type="ChEBI" id="CHEBI:18248"/>
    </ligandPart>
</feature>
<feature type="binding site" description="axial binding residue" evidence="2">
    <location>
        <position position="197"/>
    </location>
    <ligand>
        <name>heme b</name>
        <dbReference type="ChEBI" id="CHEBI:60344"/>
        <label>b566</label>
    </ligand>
    <ligandPart>
        <name>Fe</name>
        <dbReference type="ChEBI" id="CHEBI:18248"/>
    </ligandPart>
</feature>
<feature type="binding site" evidence="2">
    <location>
        <position position="202"/>
    </location>
    <ligand>
        <name>a ubiquinone</name>
        <dbReference type="ChEBI" id="CHEBI:16389"/>
    </ligand>
</feature>
<reference key="1">
    <citation type="journal article" date="1992" name="Nature">
        <title>Rates of mitochondrial DNA evolution in sharks are slow compared with mammals.</title>
        <authorList>
            <person name="Martin A.P."/>
            <person name="Naylor G.J.P."/>
            <person name="Palumbi S.R."/>
        </authorList>
    </citation>
    <scope>NUCLEOTIDE SEQUENCE [GENOMIC DNA]</scope>
</reference>
<keyword id="KW-0249">Electron transport</keyword>
<keyword id="KW-0349">Heme</keyword>
<keyword id="KW-0408">Iron</keyword>
<keyword id="KW-0472">Membrane</keyword>
<keyword id="KW-0479">Metal-binding</keyword>
<keyword id="KW-0496">Mitochondrion</keyword>
<keyword id="KW-0999">Mitochondrion inner membrane</keyword>
<keyword id="KW-0679">Respiratory chain</keyword>
<keyword id="KW-0812">Transmembrane</keyword>
<keyword id="KW-1133">Transmembrane helix</keyword>
<keyword id="KW-0813">Transport</keyword>
<keyword id="KW-0830">Ubiquinone</keyword>
<comment type="function">
    <text evidence="2">Component of the ubiquinol-cytochrome c reductase complex (complex III or cytochrome b-c1 complex) that is part of the mitochondrial respiratory chain. The b-c1 complex mediates electron transfer from ubiquinol to cytochrome c. Contributes to the generation of a proton gradient across the mitochondrial membrane that is then used for ATP synthesis.</text>
</comment>
<comment type="cofactor">
    <cofactor evidence="2">
        <name>heme b</name>
        <dbReference type="ChEBI" id="CHEBI:60344"/>
    </cofactor>
    <text evidence="2">Binds 2 heme b groups non-covalently.</text>
</comment>
<comment type="subunit">
    <text evidence="2">The cytochrome bc1 complex contains 3 respiratory subunits (MT-CYB, CYC1 and UQCRFS1), 2 core proteins (UQCRC1 and UQCRC2) and probably 6 low-molecular weight proteins.</text>
</comment>
<comment type="subcellular location">
    <subcellularLocation>
        <location evidence="2">Mitochondrion inner membrane</location>
        <topology evidence="2">Multi-pass membrane protein</topology>
    </subcellularLocation>
</comment>
<comment type="miscellaneous">
    <text evidence="1">Heme 1 (or BL or b562) is low-potential and absorbs at about 562 nm, and heme 2 (or BH or b566) is high-potential and absorbs at about 566 nm.</text>
</comment>
<comment type="similarity">
    <text evidence="3 4">Belongs to the cytochrome b family.</text>
</comment>
<comment type="caution">
    <text evidence="2">The full-length protein contains only eight transmembrane helices, not nine as predicted by bioinformatics tools.</text>
</comment>
<gene>
    <name type="primary">mt-cyb</name>
    <name type="synonym">cob</name>
    <name type="synonym">cytb</name>
    <name type="synonym">mtcyb</name>
</gene>
<protein>
    <recommendedName>
        <fullName>Cytochrome b</fullName>
    </recommendedName>
    <alternativeName>
        <fullName>Complex III subunit 3</fullName>
    </alternativeName>
    <alternativeName>
        <fullName>Complex III subunit III</fullName>
    </alternativeName>
    <alternativeName>
        <fullName>Cytochrome b-c1 complex subunit 3</fullName>
    </alternativeName>
    <alternativeName>
        <fullName>Ubiquinol-cytochrome-c reductase complex cytochrome b subunit</fullName>
    </alternativeName>
</protein>
<dbReference type="EMBL" id="L08040">
    <property type="protein sequence ID" value="AAA32042.1"/>
    <property type="molecule type" value="Genomic_DNA"/>
</dbReference>
<dbReference type="SMR" id="P34873"/>
<dbReference type="GO" id="GO:0005743">
    <property type="term" value="C:mitochondrial inner membrane"/>
    <property type="evidence" value="ECO:0007669"/>
    <property type="project" value="UniProtKB-SubCell"/>
</dbReference>
<dbReference type="GO" id="GO:0045275">
    <property type="term" value="C:respiratory chain complex III"/>
    <property type="evidence" value="ECO:0007669"/>
    <property type="project" value="InterPro"/>
</dbReference>
<dbReference type="GO" id="GO:0046872">
    <property type="term" value="F:metal ion binding"/>
    <property type="evidence" value="ECO:0007669"/>
    <property type="project" value="UniProtKB-KW"/>
</dbReference>
<dbReference type="GO" id="GO:0008121">
    <property type="term" value="F:ubiquinol-cytochrome-c reductase activity"/>
    <property type="evidence" value="ECO:0007669"/>
    <property type="project" value="InterPro"/>
</dbReference>
<dbReference type="GO" id="GO:0006122">
    <property type="term" value="P:mitochondrial electron transport, ubiquinol to cytochrome c"/>
    <property type="evidence" value="ECO:0007669"/>
    <property type="project" value="TreeGrafter"/>
</dbReference>
<dbReference type="CDD" id="cd00290">
    <property type="entry name" value="cytochrome_b_C"/>
    <property type="match status" value="1"/>
</dbReference>
<dbReference type="CDD" id="cd00284">
    <property type="entry name" value="Cytochrome_b_N"/>
    <property type="match status" value="1"/>
</dbReference>
<dbReference type="FunFam" id="1.20.810.10:FF:000002">
    <property type="entry name" value="Cytochrome b"/>
    <property type="match status" value="1"/>
</dbReference>
<dbReference type="Gene3D" id="1.20.810.10">
    <property type="entry name" value="Cytochrome Bc1 Complex, Chain C"/>
    <property type="match status" value="1"/>
</dbReference>
<dbReference type="InterPro" id="IPR005798">
    <property type="entry name" value="Cyt_b/b6_C"/>
</dbReference>
<dbReference type="InterPro" id="IPR036150">
    <property type="entry name" value="Cyt_b/b6_C_sf"/>
</dbReference>
<dbReference type="InterPro" id="IPR005797">
    <property type="entry name" value="Cyt_b/b6_N"/>
</dbReference>
<dbReference type="InterPro" id="IPR027387">
    <property type="entry name" value="Cytb/b6-like_sf"/>
</dbReference>
<dbReference type="InterPro" id="IPR030689">
    <property type="entry name" value="Cytochrome_b"/>
</dbReference>
<dbReference type="InterPro" id="IPR048260">
    <property type="entry name" value="Cytochrome_b_C_euk/bac"/>
</dbReference>
<dbReference type="InterPro" id="IPR048259">
    <property type="entry name" value="Cytochrome_b_N_euk/bac"/>
</dbReference>
<dbReference type="InterPro" id="IPR016174">
    <property type="entry name" value="Di-haem_cyt_TM"/>
</dbReference>
<dbReference type="PANTHER" id="PTHR19271">
    <property type="entry name" value="CYTOCHROME B"/>
    <property type="match status" value="1"/>
</dbReference>
<dbReference type="PANTHER" id="PTHR19271:SF16">
    <property type="entry name" value="CYTOCHROME B"/>
    <property type="match status" value="1"/>
</dbReference>
<dbReference type="Pfam" id="PF00032">
    <property type="entry name" value="Cytochrom_B_C"/>
    <property type="match status" value="1"/>
</dbReference>
<dbReference type="Pfam" id="PF00033">
    <property type="entry name" value="Cytochrome_B"/>
    <property type="match status" value="1"/>
</dbReference>
<dbReference type="PIRSF" id="PIRSF038885">
    <property type="entry name" value="COB"/>
    <property type="match status" value="1"/>
</dbReference>
<dbReference type="SUPFAM" id="SSF81648">
    <property type="entry name" value="a domain/subunit of cytochrome bc1 complex (Ubiquinol-cytochrome c reductase)"/>
    <property type="match status" value="1"/>
</dbReference>
<dbReference type="SUPFAM" id="SSF81342">
    <property type="entry name" value="Transmembrane di-heme cytochromes"/>
    <property type="match status" value="1"/>
</dbReference>
<dbReference type="PROSITE" id="PS51003">
    <property type="entry name" value="CYTB_CTER"/>
    <property type="match status" value="1"/>
</dbReference>
<dbReference type="PROSITE" id="PS51002">
    <property type="entry name" value="CYTB_NTER"/>
    <property type="match status" value="1"/>
</dbReference>
<accession>P34873</accession>
<name>CYB_PRIGL</name>